<proteinExistence type="predicted"/>
<reference key="1">
    <citation type="journal article" date="1998" name="Nature">
        <title>The complete genome of the hyperthermophilic bacterium Aquifex aeolicus.</title>
        <authorList>
            <person name="Deckert G."/>
            <person name="Warren P.V."/>
            <person name="Gaasterland T."/>
            <person name="Young W.G."/>
            <person name="Lenox A.L."/>
            <person name="Graham D.E."/>
            <person name="Overbeek R."/>
            <person name="Snead M.A."/>
            <person name="Keller M."/>
            <person name="Aujay M."/>
            <person name="Huber R."/>
            <person name="Feldman R.A."/>
            <person name="Short J.M."/>
            <person name="Olsen G.J."/>
            <person name="Swanson R.V."/>
        </authorList>
    </citation>
    <scope>NUCLEOTIDE SEQUENCE [LARGE SCALE GENOMIC DNA]</scope>
    <source>
        <strain>VF5</strain>
    </source>
</reference>
<dbReference type="EMBL" id="AE000657">
    <property type="protein sequence ID" value="AAC07706.1"/>
    <property type="molecule type" value="Genomic_DNA"/>
</dbReference>
<dbReference type="PIR" id="D70463">
    <property type="entry name" value="D70463"/>
</dbReference>
<dbReference type="RefSeq" id="NP_214302.1">
    <property type="nucleotide sequence ID" value="NC_000918.1"/>
</dbReference>
<dbReference type="SMR" id="O67734"/>
<dbReference type="STRING" id="224324.aq_1894"/>
<dbReference type="EnsemblBacteria" id="AAC07706">
    <property type="protein sequence ID" value="AAC07706"/>
    <property type="gene ID" value="aq_1894"/>
</dbReference>
<dbReference type="KEGG" id="aae:aq_1894"/>
<dbReference type="HOGENOM" id="CLU_1168756_0_0_0"/>
<dbReference type="InParanoid" id="O67734"/>
<dbReference type="Proteomes" id="UP000000798">
    <property type="component" value="Chromosome"/>
</dbReference>
<dbReference type="GO" id="GO:0016020">
    <property type="term" value="C:membrane"/>
    <property type="evidence" value="ECO:0007669"/>
    <property type="project" value="UniProtKB-SubCell"/>
</dbReference>
<dbReference type="GO" id="GO:0042834">
    <property type="term" value="F:peptidoglycan binding"/>
    <property type="evidence" value="ECO:0007669"/>
    <property type="project" value="InterPro"/>
</dbReference>
<dbReference type="Gene3D" id="3.30.70.1070">
    <property type="entry name" value="Sporulation related repeat"/>
    <property type="match status" value="1"/>
</dbReference>
<dbReference type="InterPro" id="IPR052521">
    <property type="entry name" value="Cell_div_SPOR-domain"/>
</dbReference>
<dbReference type="InterPro" id="IPR007730">
    <property type="entry name" value="SPOR-like_dom"/>
</dbReference>
<dbReference type="InterPro" id="IPR036680">
    <property type="entry name" value="SPOR-like_sf"/>
</dbReference>
<dbReference type="PANTHER" id="PTHR38687:SF1">
    <property type="entry name" value="CELL DIVISION PROTEIN DEDD"/>
    <property type="match status" value="1"/>
</dbReference>
<dbReference type="PANTHER" id="PTHR38687">
    <property type="entry name" value="CELL DIVISION PROTEIN DEDD-RELATED"/>
    <property type="match status" value="1"/>
</dbReference>
<dbReference type="Pfam" id="PF05036">
    <property type="entry name" value="SPOR"/>
    <property type="match status" value="1"/>
</dbReference>
<dbReference type="SUPFAM" id="SSF110997">
    <property type="entry name" value="Sporulation related repeat"/>
    <property type="match status" value="1"/>
</dbReference>
<dbReference type="PROSITE" id="PS51724">
    <property type="entry name" value="SPOR"/>
    <property type="match status" value="1"/>
</dbReference>
<sequence>MVIMLIFASSTGTILPSKKAKSMEKDFSIFQGNKLNLKYKRQREEVMQKKHRLIFLATVLAGLILFYFGVDTWMKQKQVQQNQPPPIVIKPVAPVKPKTQESNQTTKKEVKQEEQKKEEPKKMVQKQETQEKREVKKSEKNEVKQTQEKKDVKVAKKVPKTEKKAANLRTYKFQVGAFRYRENAYKMAKIVRSKGFDAQVVKVGSLYRVYAYVKAKNYWEAKREIKKHFKDAIFVRK</sequence>
<protein>
    <recommendedName>
        <fullName>Uncharacterized protein aq_1894</fullName>
    </recommendedName>
</protein>
<feature type="chain" id="PRO_0000186955" description="Uncharacterized protein aq_1894">
    <location>
        <begin position="1"/>
        <end position="237"/>
    </location>
</feature>
<feature type="transmembrane region" description="Helical" evidence="1">
    <location>
        <begin position="53"/>
        <end position="70"/>
    </location>
</feature>
<feature type="domain" description="SPOR">
    <location>
        <begin position="165"/>
        <end position="237"/>
    </location>
</feature>
<feature type="region of interest" description="Disordered" evidence="2">
    <location>
        <begin position="85"/>
        <end position="155"/>
    </location>
</feature>
<feature type="coiled-coil region" evidence="1">
    <location>
        <begin position="98"/>
        <end position="157"/>
    </location>
</feature>
<feature type="compositionally biased region" description="Basic and acidic residues" evidence="2">
    <location>
        <begin position="106"/>
        <end position="122"/>
    </location>
</feature>
<feature type="compositionally biased region" description="Basic and acidic residues" evidence="2">
    <location>
        <begin position="128"/>
        <end position="155"/>
    </location>
</feature>
<accession>O67734</accession>
<evidence type="ECO:0000255" key="1"/>
<evidence type="ECO:0000256" key="2">
    <source>
        <dbReference type="SAM" id="MobiDB-lite"/>
    </source>
</evidence>
<evidence type="ECO:0000305" key="3"/>
<organism>
    <name type="scientific">Aquifex aeolicus (strain VF5)</name>
    <dbReference type="NCBI Taxonomy" id="224324"/>
    <lineage>
        <taxon>Bacteria</taxon>
        <taxon>Pseudomonadati</taxon>
        <taxon>Aquificota</taxon>
        <taxon>Aquificia</taxon>
        <taxon>Aquificales</taxon>
        <taxon>Aquificaceae</taxon>
        <taxon>Aquifex</taxon>
    </lineage>
</organism>
<gene>
    <name type="ordered locus">aq_1894</name>
</gene>
<name>Y1894_AQUAE</name>
<keyword id="KW-0175">Coiled coil</keyword>
<keyword id="KW-0472">Membrane</keyword>
<keyword id="KW-1185">Reference proteome</keyword>
<keyword id="KW-0812">Transmembrane</keyword>
<keyword id="KW-1133">Transmembrane helix</keyword>
<comment type="subcellular location">
    <subcellularLocation>
        <location evidence="3">Membrane</location>
        <topology evidence="3">Single-pass membrane protein</topology>
    </subcellularLocation>
</comment>